<accession>Q47B44</accession>
<evidence type="ECO:0000255" key="1">
    <source>
        <dbReference type="HAMAP-Rule" id="MF_01187"/>
    </source>
</evidence>
<dbReference type="EMBL" id="CP000089">
    <property type="protein sequence ID" value="AAZ47937.1"/>
    <property type="molecule type" value="Genomic_DNA"/>
</dbReference>
<dbReference type="SMR" id="Q47B44"/>
<dbReference type="STRING" id="159087.Daro_3207"/>
<dbReference type="KEGG" id="dar:Daro_3207"/>
<dbReference type="eggNOG" id="COG2835">
    <property type="taxonomic scope" value="Bacteria"/>
</dbReference>
<dbReference type="HOGENOM" id="CLU_155659_3_1_4"/>
<dbReference type="OrthoDB" id="9812205at2"/>
<dbReference type="GO" id="GO:0005829">
    <property type="term" value="C:cytosol"/>
    <property type="evidence" value="ECO:0007669"/>
    <property type="project" value="TreeGrafter"/>
</dbReference>
<dbReference type="FunFam" id="2.20.25.10:FF:000002">
    <property type="entry name" value="UPF0434 protein YcaR"/>
    <property type="match status" value="1"/>
</dbReference>
<dbReference type="Gene3D" id="2.20.25.10">
    <property type="match status" value="1"/>
</dbReference>
<dbReference type="HAMAP" id="MF_01187">
    <property type="entry name" value="UPF0434"/>
    <property type="match status" value="1"/>
</dbReference>
<dbReference type="InterPro" id="IPR005651">
    <property type="entry name" value="Trm112-like"/>
</dbReference>
<dbReference type="PANTHER" id="PTHR33505:SF4">
    <property type="entry name" value="PROTEIN PREY, MITOCHONDRIAL"/>
    <property type="match status" value="1"/>
</dbReference>
<dbReference type="PANTHER" id="PTHR33505">
    <property type="entry name" value="ZGC:162634"/>
    <property type="match status" value="1"/>
</dbReference>
<dbReference type="Pfam" id="PF03966">
    <property type="entry name" value="Trm112p"/>
    <property type="match status" value="1"/>
</dbReference>
<dbReference type="SUPFAM" id="SSF158997">
    <property type="entry name" value="Trm112p-like"/>
    <property type="match status" value="1"/>
</dbReference>
<protein>
    <recommendedName>
        <fullName evidence="1">UPF0434 protein Daro_3207</fullName>
    </recommendedName>
</protein>
<proteinExistence type="inferred from homology"/>
<feature type="chain" id="PRO_0000291084" description="UPF0434 protein Daro_3207">
    <location>
        <begin position="1"/>
        <end position="58"/>
    </location>
</feature>
<name>Y3207_DECAR</name>
<gene>
    <name type="ordered locus">Daro_3207</name>
</gene>
<sequence>MDARLLDILVCPICKGNLEHRKAEKELVCKPCKLAFPIRDDIPIMLEDEARQLTADGQ</sequence>
<organism>
    <name type="scientific">Dechloromonas aromatica (strain RCB)</name>
    <dbReference type="NCBI Taxonomy" id="159087"/>
    <lineage>
        <taxon>Bacteria</taxon>
        <taxon>Pseudomonadati</taxon>
        <taxon>Pseudomonadota</taxon>
        <taxon>Betaproteobacteria</taxon>
        <taxon>Rhodocyclales</taxon>
        <taxon>Azonexaceae</taxon>
        <taxon>Dechloromonas</taxon>
    </lineage>
</organism>
<comment type="similarity">
    <text evidence="1">Belongs to the UPF0434 family.</text>
</comment>
<reference key="1">
    <citation type="journal article" date="2009" name="BMC Genomics">
        <title>Metabolic analysis of the soil microbe Dechloromonas aromatica str. RCB: indications of a surprisingly complex life-style and cryptic anaerobic pathways for aromatic degradation.</title>
        <authorList>
            <person name="Salinero K.K."/>
            <person name="Keller K."/>
            <person name="Feil W.S."/>
            <person name="Feil H."/>
            <person name="Trong S."/>
            <person name="Di Bartolo G."/>
            <person name="Lapidus A."/>
        </authorList>
    </citation>
    <scope>NUCLEOTIDE SEQUENCE [LARGE SCALE GENOMIC DNA]</scope>
    <source>
        <strain>RCB</strain>
    </source>
</reference>